<comment type="function">
    <text evidence="1">Catalyzes the formation of L-homocysteine from O-succinyl-L-homoserine (OSHS) and hydrogen sulfide.</text>
</comment>
<comment type="catalytic activity">
    <reaction evidence="1">
        <text>O-succinyl-L-homoserine + hydrogen sulfide = L-homocysteine + succinate</text>
        <dbReference type="Rhea" id="RHEA:27826"/>
        <dbReference type="ChEBI" id="CHEBI:29919"/>
        <dbReference type="ChEBI" id="CHEBI:30031"/>
        <dbReference type="ChEBI" id="CHEBI:57661"/>
        <dbReference type="ChEBI" id="CHEBI:58199"/>
    </reaction>
</comment>
<comment type="cofactor">
    <cofactor evidence="1 2">
        <name>pyridoxal 5'-phosphate</name>
        <dbReference type="ChEBI" id="CHEBI:597326"/>
    </cofactor>
    <text evidence="2">Binds 1 pyridoxal phosphate per subunit.</text>
</comment>
<comment type="pathway">
    <text evidence="1">Amino-acid biosynthesis; L-methionine biosynthesis via de novo pathway; L-homocysteine from O-succinyl-L-homoserine: step 1/1.</text>
</comment>
<comment type="subunit">
    <text evidence="1 5">Homotetramer.</text>
</comment>
<comment type="similarity">
    <text evidence="1 4">Belongs to the trans-sulfuration enzymes family. MetZ subfamily.</text>
</comment>
<dbReference type="EC" id="2.5.1.-" evidence="1"/>
<dbReference type="EMBL" id="AL123456">
    <property type="protein sequence ID" value="CCP43121.1"/>
    <property type="molecule type" value="Genomic_DNA"/>
</dbReference>
<dbReference type="PIR" id="F70632">
    <property type="entry name" value="F70632"/>
</dbReference>
<dbReference type="RefSeq" id="NP_214905.1">
    <property type="nucleotide sequence ID" value="NC_000962.3"/>
</dbReference>
<dbReference type="RefSeq" id="WP_003401927.1">
    <property type="nucleotide sequence ID" value="NZ_NVQJ01000002.1"/>
</dbReference>
<dbReference type="PDB" id="3NDN">
    <property type="method" value="X-ray"/>
    <property type="resolution" value="1.85 A"/>
    <property type="chains" value="A/B/C/D=1-406"/>
</dbReference>
<dbReference type="PDBsum" id="3NDN"/>
<dbReference type="SMR" id="P9WGB5"/>
<dbReference type="FunCoup" id="P9WGB5">
    <property type="interactions" value="32"/>
</dbReference>
<dbReference type="STRING" id="83332.Rv0391"/>
<dbReference type="PaxDb" id="83332-Rv0391"/>
<dbReference type="DNASU" id="886431"/>
<dbReference type="GeneID" id="886431"/>
<dbReference type="KEGG" id="mtu:Rv0391"/>
<dbReference type="KEGG" id="mtv:RVBD_0391"/>
<dbReference type="TubercuList" id="Rv0391"/>
<dbReference type="eggNOG" id="COG0626">
    <property type="taxonomic scope" value="Bacteria"/>
</dbReference>
<dbReference type="InParanoid" id="P9WGB5"/>
<dbReference type="OrthoDB" id="9780685at2"/>
<dbReference type="PhylomeDB" id="P9WGB5"/>
<dbReference type="UniPathway" id="UPA00051">
    <property type="reaction ID" value="UER00449"/>
</dbReference>
<dbReference type="EvolutionaryTrace" id="P9WGB5"/>
<dbReference type="Proteomes" id="UP000001584">
    <property type="component" value="Chromosome"/>
</dbReference>
<dbReference type="GO" id="GO:0005737">
    <property type="term" value="C:cytoplasm"/>
    <property type="evidence" value="ECO:0000318"/>
    <property type="project" value="GO_Central"/>
</dbReference>
<dbReference type="GO" id="GO:0016846">
    <property type="term" value="F:carbon-sulfur lyase activity"/>
    <property type="evidence" value="ECO:0000318"/>
    <property type="project" value="GO_Central"/>
</dbReference>
<dbReference type="GO" id="GO:0030170">
    <property type="term" value="F:pyridoxal phosphate binding"/>
    <property type="evidence" value="ECO:0000318"/>
    <property type="project" value="GO_Central"/>
</dbReference>
<dbReference type="GO" id="GO:0016765">
    <property type="term" value="F:transferase activity, transferring alkyl or aryl (other than methyl) groups"/>
    <property type="evidence" value="ECO:0007669"/>
    <property type="project" value="UniProtKB-UniRule"/>
</dbReference>
<dbReference type="GO" id="GO:0071266">
    <property type="term" value="P:'de novo' L-methionine biosynthetic process"/>
    <property type="evidence" value="ECO:0007669"/>
    <property type="project" value="UniProtKB-UniRule"/>
</dbReference>
<dbReference type="GO" id="GO:0071268">
    <property type="term" value="P:homocysteine biosynthetic process"/>
    <property type="evidence" value="ECO:0007669"/>
    <property type="project" value="InterPro"/>
</dbReference>
<dbReference type="GO" id="GO:0019346">
    <property type="term" value="P:transsulfuration"/>
    <property type="evidence" value="ECO:0000318"/>
    <property type="project" value="GO_Central"/>
</dbReference>
<dbReference type="CDD" id="cd00614">
    <property type="entry name" value="CGS_like"/>
    <property type="match status" value="1"/>
</dbReference>
<dbReference type="FunFam" id="3.90.1150.10:FF:000033">
    <property type="entry name" value="Cystathionine gamma-synthase"/>
    <property type="match status" value="1"/>
</dbReference>
<dbReference type="FunFam" id="3.40.640.10:FF:000035">
    <property type="entry name" value="O-succinylhomoserine sulfhydrylase"/>
    <property type="match status" value="1"/>
</dbReference>
<dbReference type="Gene3D" id="3.90.1150.10">
    <property type="entry name" value="Aspartate Aminotransferase, domain 1"/>
    <property type="match status" value="1"/>
</dbReference>
<dbReference type="Gene3D" id="3.40.640.10">
    <property type="entry name" value="Type I PLP-dependent aspartate aminotransferase-like (Major domain)"/>
    <property type="match status" value="1"/>
</dbReference>
<dbReference type="HAMAP" id="MF_02056">
    <property type="entry name" value="MetZ"/>
    <property type="match status" value="1"/>
</dbReference>
<dbReference type="InterPro" id="IPR000277">
    <property type="entry name" value="Cys/Met-Metab_PyrdxlP-dep_enz"/>
</dbReference>
<dbReference type="InterPro" id="IPR006234">
    <property type="entry name" value="O-succ-hSer_sulfhydrylase"/>
</dbReference>
<dbReference type="InterPro" id="IPR015424">
    <property type="entry name" value="PyrdxlP-dep_Trfase"/>
</dbReference>
<dbReference type="InterPro" id="IPR015421">
    <property type="entry name" value="PyrdxlP-dep_Trfase_major"/>
</dbReference>
<dbReference type="InterPro" id="IPR015422">
    <property type="entry name" value="PyrdxlP-dep_Trfase_small"/>
</dbReference>
<dbReference type="NCBIfam" id="TIGR01325">
    <property type="entry name" value="O_suc_HS_sulf"/>
    <property type="match status" value="1"/>
</dbReference>
<dbReference type="NCBIfam" id="NF005870">
    <property type="entry name" value="PRK07810.1"/>
    <property type="match status" value="1"/>
</dbReference>
<dbReference type="PANTHER" id="PTHR11808:SF80">
    <property type="entry name" value="CYSTATHIONINE GAMMA-LYASE"/>
    <property type="match status" value="1"/>
</dbReference>
<dbReference type="PANTHER" id="PTHR11808">
    <property type="entry name" value="TRANS-SULFURATION ENZYME FAMILY MEMBER"/>
    <property type="match status" value="1"/>
</dbReference>
<dbReference type="Pfam" id="PF01053">
    <property type="entry name" value="Cys_Met_Meta_PP"/>
    <property type="match status" value="1"/>
</dbReference>
<dbReference type="PIRSF" id="PIRSF001434">
    <property type="entry name" value="CGS"/>
    <property type="match status" value="1"/>
</dbReference>
<dbReference type="SUPFAM" id="SSF53383">
    <property type="entry name" value="PLP-dependent transferases"/>
    <property type="match status" value="1"/>
</dbReference>
<accession>P9WGB5</accession>
<accession>L0T3J4</accession>
<accession>P95199</accession>
<accession>Q7D9W7</accession>
<protein>
    <recommendedName>
        <fullName evidence="1 3">O-succinylhomoserine sulfhydrylase</fullName>
        <shortName evidence="1">OSH sulfhydrylase</shortName>
        <shortName evidence="1">OSHS sulfhydrylase</shortName>
        <ecNumber evidence="1">2.5.1.-</ecNumber>
    </recommendedName>
</protein>
<reference key="1">
    <citation type="journal article" date="1998" name="Nature">
        <title>Deciphering the biology of Mycobacterium tuberculosis from the complete genome sequence.</title>
        <authorList>
            <person name="Cole S.T."/>
            <person name="Brosch R."/>
            <person name="Parkhill J."/>
            <person name="Garnier T."/>
            <person name="Churcher C.M."/>
            <person name="Harris D.E."/>
            <person name="Gordon S.V."/>
            <person name="Eiglmeier K."/>
            <person name="Gas S."/>
            <person name="Barry C.E. III"/>
            <person name="Tekaia F."/>
            <person name="Badcock K."/>
            <person name="Basham D."/>
            <person name="Brown D."/>
            <person name="Chillingworth T."/>
            <person name="Connor R."/>
            <person name="Davies R.M."/>
            <person name="Devlin K."/>
            <person name="Feltwell T."/>
            <person name="Gentles S."/>
            <person name="Hamlin N."/>
            <person name="Holroyd S."/>
            <person name="Hornsby T."/>
            <person name="Jagels K."/>
            <person name="Krogh A."/>
            <person name="McLean J."/>
            <person name="Moule S."/>
            <person name="Murphy L.D."/>
            <person name="Oliver S."/>
            <person name="Osborne J."/>
            <person name="Quail M.A."/>
            <person name="Rajandream M.A."/>
            <person name="Rogers J."/>
            <person name="Rutter S."/>
            <person name="Seeger K."/>
            <person name="Skelton S."/>
            <person name="Squares S."/>
            <person name="Squares R."/>
            <person name="Sulston J.E."/>
            <person name="Taylor K."/>
            <person name="Whitehead S."/>
            <person name="Barrell B.G."/>
        </authorList>
    </citation>
    <scope>NUCLEOTIDE SEQUENCE [LARGE SCALE GENOMIC DNA]</scope>
    <source>
        <strain>ATCC 25618 / H37Rv</strain>
    </source>
</reference>
<reference key="2">
    <citation type="journal article" date="2011" name="Mol. Cell. Proteomics">
        <title>Proteogenomic analysis of Mycobacterium tuberculosis by high resolution mass spectrometry.</title>
        <authorList>
            <person name="Kelkar D.S."/>
            <person name="Kumar D."/>
            <person name="Kumar P."/>
            <person name="Balakrishnan L."/>
            <person name="Muthusamy B."/>
            <person name="Yadav A.K."/>
            <person name="Shrivastava P."/>
            <person name="Marimuthu A."/>
            <person name="Anand S."/>
            <person name="Sundaram H."/>
            <person name="Kingsbury R."/>
            <person name="Harsha H.C."/>
            <person name="Nair B."/>
            <person name="Prasad T.S."/>
            <person name="Chauhan D.S."/>
            <person name="Katoch K."/>
            <person name="Katoch V.M."/>
            <person name="Kumar P."/>
            <person name="Chaerkady R."/>
            <person name="Ramachandran S."/>
            <person name="Dash D."/>
            <person name="Pandey A."/>
        </authorList>
    </citation>
    <scope>IDENTIFICATION BY MASS SPECTROMETRY [LARGE SCALE ANALYSIS]</scope>
    <source>
        <strain>ATCC 25618 / H37Rv</strain>
    </source>
</reference>
<reference key="3">
    <citation type="submission" date="2010-06" db="PDB data bank">
        <title>Crystal structure of O-succinylhomoserine sulfhydrylase from Mycobacterium tuberculosis covalently bound to pyridoxal-5-phosphate.</title>
        <authorList>
            <consortium name="Seattle structural genomics center for infectious disease (SSGCID)"/>
        </authorList>
    </citation>
    <scope>X-RAY CRYSTALLOGRAPHY (1.85 ANGSTROMS) IN COMPLEX WITH PLP</scope>
    <scope>COFACTOR</scope>
    <scope>SUBUNIT</scope>
</reference>
<sequence length="406" mass="43345">MTDESSVRTPKALPDGVSQATVGVRGGMLRSGFEETAEAMYLTSGYVYGSAAVAEKSFAGELDHYVYSRYGNPTVSVFEERLRLIEGAPAAFATASGMAAVFTSLGALLGAGDRLVAARSLFGSCFVVCSEILPRWGVQTVFVDGDDLSQWERALSVPTQAVFFETPSNPMQSLVDIAAVTELAHAAGAKVVLDNVFATPLLQQGFPLGVDVVVYSGTKHIDGQGRVLGGAILGDREYIDGPVQKLMRHTGPAMSAFNAWVLLKGLETLAIRVQHSNASAQRIAEFLNGHPSVRWVRYPYLPSHPQYDLAKRQMSGGGTVVTFALDCPEDVAKQRAFEVLDKMRLIDISNNLGDAKSLVTHPATTTHRAMGPEGRAAIGLGDGVVRISVGLEDTDDLIADIDRALS</sequence>
<organism>
    <name type="scientific">Mycobacterium tuberculosis (strain ATCC 25618 / H37Rv)</name>
    <dbReference type="NCBI Taxonomy" id="83332"/>
    <lineage>
        <taxon>Bacteria</taxon>
        <taxon>Bacillati</taxon>
        <taxon>Actinomycetota</taxon>
        <taxon>Actinomycetes</taxon>
        <taxon>Mycobacteriales</taxon>
        <taxon>Mycobacteriaceae</taxon>
        <taxon>Mycobacterium</taxon>
        <taxon>Mycobacterium tuberculosis complex</taxon>
    </lineage>
</organism>
<keyword id="KW-0002">3D-structure</keyword>
<keyword id="KW-0028">Amino-acid biosynthesis</keyword>
<keyword id="KW-0486">Methionine biosynthesis</keyword>
<keyword id="KW-0663">Pyridoxal phosphate</keyword>
<keyword id="KW-1185">Reference proteome</keyword>
<keyword id="KW-0808">Transferase</keyword>
<feature type="chain" id="PRO_0000416406" description="O-succinylhomoserine sulfhydrylase">
    <location>
        <begin position="1"/>
        <end position="406"/>
    </location>
</feature>
<feature type="modified residue" description="N6-(pyridoxal phosphate)lysine" evidence="1 2">
    <location>
        <position position="219"/>
    </location>
</feature>
<feature type="helix" evidence="6">
    <location>
        <begin position="19"/>
        <end position="25"/>
    </location>
</feature>
<feature type="strand" evidence="6">
    <location>
        <begin position="35"/>
        <end position="37"/>
    </location>
</feature>
<feature type="strand" evidence="6">
    <location>
        <begin position="44"/>
        <end position="46"/>
    </location>
</feature>
<feature type="helix" evidence="6">
    <location>
        <begin position="51"/>
        <end position="58"/>
    </location>
</feature>
<feature type="turn" evidence="6">
    <location>
        <begin position="68"/>
        <end position="70"/>
    </location>
</feature>
<feature type="helix" evidence="6">
    <location>
        <begin position="73"/>
        <end position="86"/>
    </location>
</feature>
<feature type="strand" evidence="6">
    <location>
        <begin position="89"/>
        <end position="96"/>
    </location>
</feature>
<feature type="helix" evidence="6">
    <location>
        <begin position="97"/>
        <end position="106"/>
    </location>
</feature>
<feature type="strand" evidence="6">
    <location>
        <begin position="114"/>
        <end position="119"/>
    </location>
</feature>
<feature type="helix" evidence="6">
    <location>
        <begin position="123"/>
        <end position="130"/>
    </location>
</feature>
<feature type="helix" evidence="6">
    <location>
        <begin position="132"/>
        <end position="135"/>
    </location>
</feature>
<feature type="strand" evidence="6">
    <location>
        <begin position="139"/>
        <end position="143"/>
    </location>
</feature>
<feature type="helix" evidence="6">
    <location>
        <begin position="148"/>
        <end position="154"/>
    </location>
</feature>
<feature type="strand" evidence="6">
    <location>
        <begin position="160"/>
        <end position="167"/>
    </location>
</feature>
<feature type="turn" evidence="6">
    <location>
        <begin position="169"/>
        <end position="171"/>
    </location>
</feature>
<feature type="helix" evidence="6">
    <location>
        <begin position="177"/>
        <end position="186"/>
    </location>
</feature>
<feature type="strand" evidence="6">
    <location>
        <begin position="190"/>
        <end position="194"/>
    </location>
</feature>
<feature type="turn" evidence="6">
    <location>
        <begin position="196"/>
        <end position="198"/>
    </location>
</feature>
<feature type="helix" evidence="6">
    <location>
        <begin position="199"/>
        <end position="202"/>
    </location>
</feature>
<feature type="helix" evidence="6">
    <location>
        <begin position="206"/>
        <end position="208"/>
    </location>
</feature>
<feature type="strand" evidence="6">
    <location>
        <begin position="211"/>
        <end position="216"/>
    </location>
</feature>
<feature type="strand" evidence="6">
    <location>
        <begin position="230"/>
        <end position="234"/>
    </location>
</feature>
<feature type="helix" evidence="6">
    <location>
        <begin position="236"/>
        <end position="239"/>
    </location>
</feature>
<feature type="helix" evidence="6">
    <location>
        <begin position="242"/>
        <end position="250"/>
    </location>
</feature>
<feature type="helix" evidence="6">
    <location>
        <begin position="256"/>
        <end position="265"/>
    </location>
</feature>
<feature type="helix" evidence="6">
    <location>
        <begin position="266"/>
        <end position="268"/>
    </location>
</feature>
<feature type="helix" evidence="6">
    <location>
        <begin position="269"/>
        <end position="288"/>
    </location>
</feature>
<feature type="strand" evidence="6">
    <location>
        <begin position="293"/>
        <end position="297"/>
    </location>
</feature>
<feature type="helix" evidence="6">
    <location>
        <begin position="307"/>
        <end position="313"/>
    </location>
</feature>
<feature type="strand" evidence="6">
    <location>
        <begin position="319"/>
        <end position="325"/>
    </location>
</feature>
<feature type="helix" evidence="6">
    <location>
        <begin position="329"/>
        <end position="331"/>
    </location>
</feature>
<feature type="helix" evidence="6">
    <location>
        <begin position="332"/>
        <end position="342"/>
    </location>
</feature>
<feature type="strand" evidence="6">
    <location>
        <begin position="344"/>
        <end position="348"/>
    </location>
</feature>
<feature type="strand" evidence="6">
    <location>
        <begin position="358"/>
        <end position="360"/>
    </location>
</feature>
<feature type="helix" evidence="6">
    <location>
        <begin position="362"/>
        <end position="364"/>
    </location>
</feature>
<feature type="turn" evidence="6">
    <location>
        <begin position="365"/>
        <end position="367"/>
    </location>
</feature>
<feature type="helix" evidence="6">
    <location>
        <begin position="371"/>
        <end position="377"/>
    </location>
</feature>
<feature type="strand" evidence="6">
    <location>
        <begin position="384"/>
        <end position="388"/>
    </location>
</feature>
<feature type="helix" evidence="6">
    <location>
        <begin position="394"/>
        <end position="405"/>
    </location>
</feature>
<gene>
    <name evidence="1" type="primary">metZ</name>
    <name type="ordered locus">Rv0391</name>
</gene>
<evidence type="ECO:0000255" key="1">
    <source>
        <dbReference type="HAMAP-Rule" id="MF_02056"/>
    </source>
</evidence>
<evidence type="ECO:0000269" key="2">
    <source ref="3"/>
</evidence>
<evidence type="ECO:0000303" key="3">
    <source ref="3"/>
</evidence>
<evidence type="ECO:0000305" key="4"/>
<evidence type="ECO:0000305" key="5">
    <source ref="3"/>
</evidence>
<evidence type="ECO:0007829" key="6">
    <source>
        <dbReference type="PDB" id="3NDN"/>
    </source>
</evidence>
<name>METZ_MYCTU</name>
<proteinExistence type="evidence at protein level"/>